<evidence type="ECO:0000269" key="1">
    <source>
    </source>
</evidence>
<evidence type="ECO:0000305" key="2"/>
<reference evidence="2" key="1">
    <citation type="journal article" date="2007" name="Biophys. J.">
        <title>Perlinhibin, a cysteine-, histidine- and arginine-rich miniprotein from abalone (Haliotis laevigata) nacre inhibits in vitro calcium carbonate crystallization.</title>
        <authorList>
            <person name="Mann K."/>
            <person name="Siedler F."/>
            <person name="Treccani L."/>
            <person name="Heinemann F."/>
            <person name="Fritz M."/>
        </authorList>
    </citation>
    <scope>PROTEIN SEQUENCE</scope>
    <scope>FUNCTION</scope>
    <scope>MASS SPECTROMETRY</scope>
    <scope>DISULFIDE BONDS</scope>
    <source>
        <tissue evidence="1">Shell</tissue>
    </source>
</reference>
<keyword id="KW-0903">Direct protein sequencing</keyword>
<keyword id="KW-1015">Disulfide bond</keyword>
<protein>
    <recommendedName>
        <fullName>Perlinhibin</fullName>
    </recommendedName>
</protein>
<accession>P85035</accession>
<name>PLINH_HALLA</name>
<proteinExistence type="evidence at protein level"/>
<dbReference type="SMR" id="P85035"/>
<sequence>ECTIGDSCVVHRHCRECRCPRGRAMCDREHHKPPHCSCHIH</sequence>
<comment type="function">
    <text evidence="1">Binds to calcite crystals in the shell and inhibits further shell growth at the binding site.</text>
</comment>
<comment type="PTM">
    <text evidence="1">Contains four disulfide bonds.</text>
</comment>
<comment type="mass spectrometry"/>
<feature type="chain" id="PRO_0000293622" description="Perlinhibin">
    <location>
        <begin position="1"/>
        <end position="41"/>
    </location>
</feature>
<organism>
    <name type="scientific">Haliotis laevigata</name>
    <name type="common">Smooth Australian abalone</name>
    <dbReference type="NCBI Taxonomy" id="36097"/>
    <lineage>
        <taxon>Eukaryota</taxon>
        <taxon>Metazoa</taxon>
        <taxon>Spiralia</taxon>
        <taxon>Lophotrochozoa</taxon>
        <taxon>Mollusca</taxon>
        <taxon>Gastropoda</taxon>
        <taxon>Vetigastropoda</taxon>
        <taxon>Lepetellida</taxon>
        <taxon>Haliotoidea</taxon>
        <taxon>Haliotidae</taxon>
        <taxon>Haliotis</taxon>
    </lineage>
</organism>